<evidence type="ECO:0000255" key="1">
    <source>
        <dbReference type="HAMAP-Rule" id="MF_00037"/>
    </source>
</evidence>
<dbReference type="EC" id="1.3.1.98" evidence="1"/>
<dbReference type="EMBL" id="CP000030">
    <property type="protein sequence ID" value="AAV86671.1"/>
    <property type="molecule type" value="Genomic_DNA"/>
</dbReference>
<dbReference type="RefSeq" id="WP_010264698.1">
    <property type="nucleotide sequence ID" value="NZ_AFMU01000058.1"/>
</dbReference>
<dbReference type="SMR" id="Q5PAK9"/>
<dbReference type="GeneID" id="7398141"/>
<dbReference type="KEGG" id="ama:AM701"/>
<dbReference type="HOGENOM" id="CLU_035304_1_0_5"/>
<dbReference type="UniPathway" id="UPA00219"/>
<dbReference type="GO" id="GO:0005829">
    <property type="term" value="C:cytosol"/>
    <property type="evidence" value="ECO:0007669"/>
    <property type="project" value="TreeGrafter"/>
</dbReference>
<dbReference type="GO" id="GO:0071949">
    <property type="term" value="F:FAD binding"/>
    <property type="evidence" value="ECO:0007669"/>
    <property type="project" value="InterPro"/>
</dbReference>
<dbReference type="GO" id="GO:0008762">
    <property type="term" value="F:UDP-N-acetylmuramate dehydrogenase activity"/>
    <property type="evidence" value="ECO:0007669"/>
    <property type="project" value="UniProtKB-UniRule"/>
</dbReference>
<dbReference type="GO" id="GO:0051301">
    <property type="term" value="P:cell division"/>
    <property type="evidence" value="ECO:0007669"/>
    <property type="project" value="UniProtKB-KW"/>
</dbReference>
<dbReference type="GO" id="GO:0071555">
    <property type="term" value="P:cell wall organization"/>
    <property type="evidence" value="ECO:0007669"/>
    <property type="project" value="UniProtKB-KW"/>
</dbReference>
<dbReference type="GO" id="GO:0009252">
    <property type="term" value="P:peptidoglycan biosynthetic process"/>
    <property type="evidence" value="ECO:0007669"/>
    <property type="project" value="UniProtKB-UniRule"/>
</dbReference>
<dbReference type="GO" id="GO:0008360">
    <property type="term" value="P:regulation of cell shape"/>
    <property type="evidence" value="ECO:0007669"/>
    <property type="project" value="UniProtKB-KW"/>
</dbReference>
<dbReference type="Gene3D" id="3.30.465.10">
    <property type="match status" value="1"/>
</dbReference>
<dbReference type="Gene3D" id="3.90.78.10">
    <property type="entry name" value="UDP-N-acetylenolpyruvoylglucosamine reductase, C-terminal domain"/>
    <property type="match status" value="1"/>
</dbReference>
<dbReference type="Gene3D" id="3.30.43.10">
    <property type="entry name" value="Uridine Diphospho-n-acetylenolpyruvylglucosamine Reductase, domain 2"/>
    <property type="match status" value="1"/>
</dbReference>
<dbReference type="HAMAP" id="MF_00037">
    <property type="entry name" value="MurB"/>
    <property type="match status" value="1"/>
</dbReference>
<dbReference type="InterPro" id="IPR016166">
    <property type="entry name" value="FAD-bd_PCMH"/>
</dbReference>
<dbReference type="InterPro" id="IPR036318">
    <property type="entry name" value="FAD-bd_PCMH-like_sf"/>
</dbReference>
<dbReference type="InterPro" id="IPR016167">
    <property type="entry name" value="FAD-bd_PCMH_sub1"/>
</dbReference>
<dbReference type="InterPro" id="IPR016169">
    <property type="entry name" value="FAD-bd_PCMH_sub2"/>
</dbReference>
<dbReference type="InterPro" id="IPR003170">
    <property type="entry name" value="MurB"/>
</dbReference>
<dbReference type="InterPro" id="IPR011601">
    <property type="entry name" value="MurB_C"/>
</dbReference>
<dbReference type="InterPro" id="IPR036635">
    <property type="entry name" value="MurB_C_sf"/>
</dbReference>
<dbReference type="InterPro" id="IPR006094">
    <property type="entry name" value="Oxid_FAD_bind_N"/>
</dbReference>
<dbReference type="NCBIfam" id="TIGR00179">
    <property type="entry name" value="murB"/>
    <property type="match status" value="1"/>
</dbReference>
<dbReference type="NCBIfam" id="NF010480">
    <property type="entry name" value="PRK13905.1"/>
    <property type="match status" value="1"/>
</dbReference>
<dbReference type="PANTHER" id="PTHR21071">
    <property type="entry name" value="UDP-N-ACETYLENOLPYRUVOYLGLUCOSAMINE REDUCTASE"/>
    <property type="match status" value="1"/>
</dbReference>
<dbReference type="PANTHER" id="PTHR21071:SF4">
    <property type="entry name" value="UDP-N-ACETYLENOLPYRUVOYLGLUCOSAMINE REDUCTASE"/>
    <property type="match status" value="1"/>
</dbReference>
<dbReference type="Pfam" id="PF01565">
    <property type="entry name" value="FAD_binding_4"/>
    <property type="match status" value="1"/>
</dbReference>
<dbReference type="Pfam" id="PF02873">
    <property type="entry name" value="MurB_C"/>
    <property type="match status" value="1"/>
</dbReference>
<dbReference type="SUPFAM" id="SSF56176">
    <property type="entry name" value="FAD-binding/transporter-associated domain-like"/>
    <property type="match status" value="1"/>
</dbReference>
<dbReference type="SUPFAM" id="SSF56194">
    <property type="entry name" value="Uridine diphospho-N-Acetylenolpyruvylglucosamine reductase, MurB, C-terminal domain"/>
    <property type="match status" value="1"/>
</dbReference>
<dbReference type="PROSITE" id="PS51387">
    <property type="entry name" value="FAD_PCMH"/>
    <property type="match status" value="1"/>
</dbReference>
<organism>
    <name type="scientific">Anaplasma marginale (strain St. Maries)</name>
    <dbReference type="NCBI Taxonomy" id="234826"/>
    <lineage>
        <taxon>Bacteria</taxon>
        <taxon>Pseudomonadati</taxon>
        <taxon>Pseudomonadota</taxon>
        <taxon>Alphaproteobacteria</taxon>
        <taxon>Rickettsiales</taxon>
        <taxon>Anaplasmataceae</taxon>
        <taxon>Anaplasma</taxon>
    </lineage>
</organism>
<proteinExistence type="inferred from homology"/>
<accession>Q5PAK9</accession>
<gene>
    <name evidence="1" type="primary">murB</name>
    <name type="ordered locus">AM701</name>
</gene>
<reference key="1">
    <citation type="journal article" date="2005" name="Proc. Natl. Acad. Sci. U.S.A.">
        <title>Complete genome sequencing of Anaplasma marginale reveals that the surface is skewed to two superfamilies of outer membrane proteins.</title>
        <authorList>
            <person name="Brayton K.A."/>
            <person name="Kappmeyer L.S."/>
            <person name="Herndon D.R."/>
            <person name="Dark M.J."/>
            <person name="Tibbals D.L."/>
            <person name="Palmer G.H."/>
            <person name="McGuire T.C."/>
            <person name="Knowles D.P. Jr."/>
        </authorList>
    </citation>
    <scope>NUCLEOTIDE SEQUENCE [LARGE SCALE GENOMIC DNA]</scope>
    <source>
        <strain>St. Maries</strain>
    </source>
</reference>
<sequence length="299" mass="32132">MSYGFVAYNLPKVQGTYRRGVKMHNATWFNVGGVAEVVFKPSSVEDLAAFVRDTNLPISVVGVASNLIVRDGIVKGVVVKLGREFSYINCNGNIITAGCATLLSNLAVAAQESGISGLEFFVGIPGTVGGAIEMNAGAYGGDVASVLRSVRAVNEHGEICTLSNDDMRYSYREHGLVGKWIFVDATFVGACGDRDAIKGTMREFIARRNDSQPVRGRTGGSTFKNPEGHQAWELIDKAGCRGLQIGGAQVSEKHCNFLLNCGGATAKDLEDLGNEIRCRVHSMFGIKLEWEIRFLGCGL</sequence>
<feature type="chain" id="PRO_0000224652" description="UDP-N-acetylenolpyruvoylglucosamine reductase">
    <location>
        <begin position="1"/>
        <end position="299"/>
    </location>
</feature>
<feature type="domain" description="FAD-binding PCMH-type" evidence="1">
    <location>
        <begin position="31"/>
        <end position="192"/>
    </location>
</feature>
<feature type="active site" evidence="1">
    <location>
        <position position="172"/>
    </location>
</feature>
<feature type="active site" description="Proton donor" evidence="1">
    <location>
        <position position="221"/>
    </location>
</feature>
<feature type="active site" evidence="1">
    <location>
        <position position="291"/>
    </location>
</feature>
<protein>
    <recommendedName>
        <fullName evidence="1">UDP-N-acetylenolpyruvoylglucosamine reductase</fullName>
        <ecNumber evidence="1">1.3.1.98</ecNumber>
    </recommendedName>
    <alternativeName>
        <fullName evidence="1">UDP-N-acetylmuramate dehydrogenase</fullName>
    </alternativeName>
</protein>
<keyword id="KW-0131">Cell cycle</keyword>
<keyword id="KW-0132">Cell division</keyword>
<keyword id="KW-0133">Cell shape</keyword>
<keyword id="KW-0961">Cell wall biogenesis/degradation</keyword>
<keyword id="KW-0963">Cytoplasm</keyword>
<keyword id="KW-0274">FAD</keyword>
<keyword id="KW-0285">Flavoprotein</keyword>
<keyword id="KW-0521">NADP</keyword>
<keyword id="KW-0560">Oxidoreductase</keyword>
<keyword id="KW-0573">Peptidoglycan synthesis</keyword>
<comment type="function">
    <text evidence="1">Cell wall formation.</text>
</comment>
<comment type="catalytic activity">
    <reaction evidence="1">
        <text>UDP-N-acetyl-alpha-D-muramate + NADP(+) = UDP-N-acetyl-3-O-(1-carboxyvinyl)-alpha-D-glucosamine + NADPH + H(+)</text>
        <dbReference type="Rhea" id="RHEA:12248"/>
        <dbReference type="ChEBI" id="CHEBI:15378"/>
        <dbReference type="ChEBI" id="CHEBI:57783"/>
        <dbReference type="ChEBI" id="CHEBI:58349"/>
        <dbReference type="ChEBI" id="CHEBI:68483"/>
        <dbReference type="ChEBI" id="CHEBI:70757"/>
        <dbReference type="EC" id="1.3.1.98"/>
    </reaction>
</comment>
<comment type="cofactor">
    <cofactor evidence="1">
        <name>FAD</name>
        <dbReference type="ChEBI" id="CHEBI:57692"/>
    </cofactor>
</comment>
<comment type="pathway">
    <text evidence="1">Cell wall biogenesis; peptidoglycan biosynthesis.</text>
</comment>
<comment type="subcellular location">
    <subcellularLocation>
        <location evidence="1">Cytoplasm</location>
    </subcellularLocation>
</comment>
<comment type="similarity">
    <text evidence="1">Belongs to the MurB family.</text>
</comment>
<name>MURB_ANAMM</name>